<dbReference type="EMBL" id="CP001359">
    <property type="protein sequence ID" value="ACL64229.1"/>
    <property type="molecule type" value="Genomic_DNA"/>
</dbReference>
<dbReference type="RefSeq" id="WP_012632236.1">
    <property type="nucleotide sequence ID" value="NC_011891.1"/>
</dbReference>
<dbReference type="SMR" id="B8JDY4"/>
<dbReference type="KEGG" id="acp:A2cp1_0877"/>
<dbReference type="HOGENOM" id="CLU_056887_3_0_7"/>
<dbReference type="Proteomes" id="UP000007089">
    <property type="component" value="Chromosome"/>
</dbReference>
<dbReference type="GO" id="GO:0005737">
    <property type="term" value="C:cytoplasm"/>
    <property type="evidence" value="ECO:0007669"/>
    <property type="project" value="UniProtKB-SubCell"/>
</dbReference>
<dbReference type="GO" id="GO:0097163">
    <property type="term" value="F:sulfur carrier activity"/>
    <property type="evidence" value="ECO:0007669"/>
    <property type="project" value="UniProtKB-UniRule"/>
</dbReference>
<dbReference type="GO" id="GO:0016783">
    <property type="term" value="F:sulfurtransferase activity"/>
    <property type="evidence" value="ECO:0007669"/>
    <property type="project" value="InterPro"/>
</dbReference>
<dbReference type="GO" id="GO:0006777">
    <property type="term" value="P:Mo-molybdopterin cofactor biosynthetic process"/>
    <property type="evidence" value="ECO:0007669"/>
    <property type="project" value="UniProtKB-UniRule"/>
</dbReference>
<dbReference type="Gene3D" id="3.10.20.10">
    <property type="match status" value="1"/>
</dbReference>
<dbReference type="Gene3D" id="3.40.140.10">
    <property type="entry name" value="Cytidine Deaminase, domain 2"/>
    <property type="match status" value="1"/>
</dbReference>
<dbReference type="HAMAP" id="MF_00187">
    <property type="entry name" value="FdhD"/>
    <property type="match status" value="1"/>
</dbReference>
<dbReference type="InterPro" id="IPR016193">
    <property type="entry name" value="Cytidine_deaminase-like"/>
</dbReference>
<dbReference type="InterPro" id="IPR003786">
    <property type="entry name" value="FdhD"/>
</dbReference>
<dbReference type="NCBIfam" id="TIGR00129">
    <property type="entry name" value="fdhD_narQ"/>
    <property type="match status" value="1"/>
</dbReference>
<dbReference type="PANTHER" id="PTHR30592">
    <property type="entry name" value="FORMATE DEHYDROGENASE"/>
    <property type="match status" value="1"/>
</dbReference>
<dbReference type="PANTHER" id="PTHR30592:SF1">
    <property type="entry name" value="SULFUR CARRIER PROTEIN FDHD"/>
    <property type="match status" value="1"/>
</dbReference>
<dbReference type="Pfam" id="PF02634">
    <property type="entry name" value="FdhD-NarQ"/>
    <property type="match status" value="1"/>
</dbReference>
<dbReference type="PIRSF" id="PIRSF015626">
    <property type="entry name" value="FdhD"/>
    <property type="match status" value="1"/>
</dbReference>
<dbReference type="SUPFAM" id="SSF53927">
    <property type="entry name" value="Cytidine deaminase-like"/>
    <property type="match status" value="1"/>
</dbReference>
<comment type="function">
    <text evidence="1">Required for formate dehydrogenase (FDH) activity. Acts as a sulfur carrier protein that transfers sulfur from IscS to the molybdenum cofactor prior to its insertion into FDH.</text>
</comment>
<comment type="subcellular location">
    <subcellularLocation>
        <location evidence="1">Cytoplasm</location>
    </subcellularLocation>
</comment>
<comment type="similarity">
    <text evidence="1">Belongs to the FdhD family.</text>
</comment>
<keyword id="KW-0963">Cytoplasm</keyword>
<keyword id="KW-0501">Molybdenum cofactor biosynthesis</keyword>
<gene>
    <name evidence="1" type="primary">fdhD</name>
    <name type="ordered locus">A2cp1_0877</name>
</gene>
<protein>
    <recommendedName>
        <fullName evidence="1">Sulfur carrier protein FdhD</fullName>
    </recommendedName>
</protein>
<organism>
    <name type="scientific">Anaeromyxobacter dehalogenans (strain 2CP-1 / ATCC BAA-258)</name>
    <dbReference type="NCBI Taxonomy" id="455488"/>
    <lineage>
        <taxon>Bacteria</taxon>
        <taxon>Pseudomonadati</taxon>
        <taxon>Myxococcota</taxon>
        <taxon>Myxococcia</taxon>
        <taxon>Myxococcales</taxon>
        <taxon>Cystobacterineae</taxon>
        <taxon>Anaeromyxobacteraceae</taxon>
        <taxon>Anaeromyxobacter</taxon>
    </lineage>
</organism>
<name>FDHD_ANAD2</name>
<reference key="1">
    <citation type="submission" date="2009-01" db="EMBL/GenBank/DDBJ databases">
        <title>Complete sequence of Anaeromyxobacter dehalogenans 2CP-1.</title>
        <authorList>
            <person name="Lucas S."/>
            <person name="Copeland A."/>
            <person name="Lapidus A."/>
            <person name="Glavina del Rio T."/>
            <person name="Dalin E."/>
            <person name="Tice H."/>
            <person name="Bruce D."/>
            <person name="Goodwin L."/>
            <person name="Pitluck S."/>
            <person name="Saunders E."/>
            <person name="Brettin T."/>
            <person name="Detter J.C."/>
            <person name="Han C."/>
            <person name="Larimer F."/>
            <person name="Land M."/>
            <person name="Hauser L."/>
            <person name="Kyrpides N."/>
            <person name="Ovchinnikova G."/>
            <person name="Beliaev A.S."/>
            <person name="Richardson P."/>
        </authorList>
    </citation>
    <scope>NUCLEOTIDE SEQUENCE [LARGE SCALE GENOMIC DNA]</scope>
    <source>
        <strain>2CP-1 / ATCC BAA-258</strain>
    </source>
</reference>
<feature type="chain" id="PRO_1000124213" description="Sulfur carrier protein FdhD">
    <location>
        <begin position="1"/>
        <end position="288"/>
    </location>
</feature>
<feature type="active site" description="Cysteine persulfide intermediate" evidence="1">
    <location>
        <position position="122"/>
    </location>
</feature>
<feature type="binding site" evidence="1">
    <location>
        <begin position="268"/>
        <end position="273"/>
    </location>
    <ligand>
        <name>Mo-bis(molybdopterin guanine dinucleotide)</name>
        <dbReference type="ChEBI" id="CHEBI:60539"/>
    </ligand>
</feature>
<accession>B8JDY4</accession>
<evidence type="ECO:0000255" key="1">
    <source>
        <dbReference type="HAMAP-Rule" id="MF_00187"/>
    </source>
</evidence>
<proteinExistence type="inferred from homology"/>
<sequence length="288" mass="29305">METSLRRAAAPAGAVAERTVLRNGGAVRDAVAVEEPLEIRVDGDRLATTMRTPGADADLALGFLFAEGIIAGVEDVGTVIHCGRPGEEGYGNVMDVRSAAGMRIDPERILEGRRFVPVSAACGVCGRLSIDHLMERIHPLPAGEPVAPALVAAGMEILARSQPVFERTGGLHAAVLVGRDGAPIASAEDVGRHNAVDKVVGAALRAGRVGPRAAAGPAPALLAVSGRAGFEIVQKAAAAGVPVIASVSAPSSLAVDLARAAGVTLCGFVRGERMNVYANGERLGLTGP</sequence>